<dbReference type="EC" id="3.4.23.36" evidence="1"/>
<dbReference type="EMBL" id="AM180355">
    <property type="protein sequence ID" value="CAJ69487.1"/>
    <property type="molecule type" value="Genomic_DNA"/>
</dbReference>
<dbReference type="RefSeq" id="WP_004454916.1">
    <property type="nucleotide sequence ID" value="NZ_JAUPES010000012.1"/>
</dbReference>
<dbReference type="RefSeq" id="YP_001089114.1">
    <property type="nucleotide sequence ID" value="NC_009089.1"/>
</dbReference>
<dbReference type="SMR" id="Q182T8"/>
<dbReference type="STRING" id="272563.CD630_25970"/>
<dbReference type="EnsemblBacteria" id="CAJ69487">
    <property type="protein sequence ID" value="CAJ69487"/>
    <property type="gene ID" value="CD630_25970"/>
</dbReference>
<dbReference type="KEGG" id="cdf:CD630_25970"/>
<dbReference type="KEGG" id="pdc:CDIF630_02851"/>
<dbReference type="PATRIC" id="fig|272563.120.peg.2739"/>
<dbReference type="eggNOG" id="COG0597">
    <property type="taxonomic scope" value="Bacteria"/>
</dbReference>
<dbReference type="OrthoDB" id="9810259at2"/>
<dbReference type="PhylomeDB" id="Q182T8"/>
<dbReference type="BioCyc" id="PDIF272563:G12WB-2754-MONOMER"/>
<dbReference type="UniPathway" id="UPA00665"/>
<dbReference type="Proteomes" id="UP000001978">
    <property type="component" value="Chromosome"/>
</dbReference>
<dbReference type="GO" id="GO:0005886">
    <property type="term" value="C:plasma membrane"/>
    <property type="evidence" value="ECO:0007669"/>
    <property type="project" value="UniProtKB-SubCell"/>
</dbReference>
<dbReference type="GO" id="GO:0004190">
    <property type="term" value="F:aspartic-type endopeptidase activity"/>
    <property type="evidence" value="ECO:0007669"/>
    <property type="project" value="UniProtKB-UniRule"/>
</dbReference>
<dbReference type="GO" id="GO:0006508">
    <property type="term" value="P:proteolysis"/>
    <property type="evidence" value="ECO:0007669"/>
    <property type="project" value="UniProtKB-KW"/>
</dbReference>
<dbReference type="HAMAP" id="MF_00161">
    <property type="entry name" value="LspA"/>
    <property type="match status" value="1"/>
</dbReference>
<dbReference type="InterPro" id="IPR001872">
    <property type="entry name" value="Peptidase_A8"/>
</dbReference>
<dbReference type="NCBIfam" id="TIGR00077">
    <property type="entry name" value="lspA"/>
    <property type="match status" value="1"/>
</dbReference>
<dbReference type="NCBIfam" id="NF011350">
    <property type="entry name" value="PRK14768.1"/>
    <property type="match status" value="1"/>
</dbReference>
<dbReference type="PANTHER" id="PTHR33695">
    <property type="entry name" value="LIPOPROTEIN SIGNAL PEPTIDASE"/>
    <property type="match status" value="1"/>
</dbReference>
<dbReference type="PANTHER" id="PTHR33695:SF1">
    <property type="entry name" value="LIPOPROTEIN SIGNAL PEPTIDASE"/>
    <property type="match status" value="1"/>
</dbReference>
<dbReference type="Pfam" id="PF01252">
    <property type="entry name" value="Peptidase_A8"/>
    <property type="match status" value="1"/>
</dbReference>
<dbReference type="PRINTS" id="PR00781">
    <property type="entry name" value="LIPOSIGPTASE"/>
</dbReference>
<dbReference type="PROSITE" id="PS00855">
    <property type="entry name" value="SPASE_II"/>
    <property type="match status" value="1"/>
</dbReference>
<protein>
    <recommendedName>
        <fullName evidence="1">Lipoprotein signal peptidase</fullName>
        <ecNumber evidence="1">3.4.23.36</ecNumber>
    </recommendedName>
    <alternativeName>
        <fullName evidence="1">Prolipoprotein signal peptidase</fullName>
    </alternativeName>
    <alternativeName>
        <fullName evidence="1">Signal peptidase II</fullName>
        <shortName evidence="1">SPase II</shortName>
    </alternativeName>
</protein>
<gene>
    <name evidence="1" type="primary">lspA</name>
    <name type="ordered locus">CD630_25970</name>
</gene>
<reference key="1">
    <citation type="journal article" date="2006" name="Nat. Genet.">
        <title>The multidrug-resistant human pathogen Clostridium difficile has a highly mobile, mosaic genome.</title>
        <authorList>
            <person name="Sebaihia M."/>
            <person name="Wren B.W."/>
            <person name="Mullany P."/>
            <person name="Fairweather N.F."/>
            <person name="Minton N."/>
            <person name="Stabler R."/>
            <person name="Thomson N.R."/>
            <person name="Roberts A.P."/>
            <person name="Cerdeno-Tarraga A.M."/>
            <person name="Wang H."/>
            <person name="Holden M.T.G."/>
            <person name="Wright A."/>
            <person name="Churcher C."/>
            <person name="Quail M.A."/>
            <person name="Baker S."/>
            <person name="Bason N."/>
            <person name="Brooks K."/>
            <person name="Chillingworth T."/>
            <person name="Cronin A."/>
            <person name="Davis P."/>
            <person name="Dowd L."/>
            <person name="Fraser A."/>
            <person name="Feltwell T."/>
            <person name="Hance Z."/>
            <person name="Holroyd S."/>
            <person name="Jagels K."/>
            <person name="Moule S."/>
            <person name="Mungall K."/>
            <person name="Price C."/>
            <person name="Rabbinowitsch E."/>
            <person name="Sharp S."/>
            <person name="Simmonds M."/>
            <person name="Stevens K."/>
            <person name="Unwin L."/>
            <person name="Whithead S."/>
            <person name="Dupuy B."/>
            <person name="Dougan G."/>
            <person name="Barrell B."/>
            <person name="Parkhill J."/>
        </authorList>
    </citation>
    <scope>NUCLEOTIDE SEQUENCE [LARGE SCALE GENOMIC DNA]</scope>
    <source>
        <strain>630</strain>
    </source>
</reference>
<comment type="function">
    <text evidence="1">This protein specifically catalyzes the removal of signal peptides from prolipoproteins.</text>
</comment>
<comment type="catalytic activity">
    <reaction evidence="1">
        <text>Release of signal peptides from bacterial membrane prolipoproteins. Hydrolyzes -Xaa-Yaa-Zaa-|-(S,diacylglyceryl)Cys-, in which Xaa is hydrophobic (preferably Leu), and Yaa (Ala or Ser) and Zaa (Gly or Ala) have small, neutral side chains.</text>
        <dbReference type="EC" id="3.4.23.36"/>
    </reaction>
</comment>
<comment type="pathway">
    <text evidence="1">Protein modification; lipoprotein biosynthesis (signal peptide cleavage).</text>
</comment>
<comment type="subcellular location">
    <subcellularLocation>
        <location evidence="1">Cell membrane</location>
        <topology evidence="1">Multi-pass membrane protein</topology>
    </subcellularLocation>
</comment>
<comment type="similarity">
    <text evidence="1">Belongs to the peptidase A8 family.</text>
</comment>
<organism>
    <name type="scientific">Clostridioides difficile (strain 630)</name>
    <name type="common">Peptoclostridium difficile</name>
    <dbReference type="NCBI Taxonomy" id="272563"/>
    <lineage>
        <taxon>Bacteria</taxon>
        <taxon>Bacillati</taxon>
        <taxon>Bacillota</taxon>
        <taxon>Clostridia</taxon>
        <taxon>Peptostreptococcales</taxon>
        <taxon>Peptostreptococcaceae</taxon>
        <taxon>Clostridioides</taxon>
    </lineage>
</organism>
<evidence type="ECO:0000255" key="1">
    <source>
        <dbReference type="HAMAP-Rule" id="MF_00161"/>
    </source>
</evidence>
<keyword id="KW-0064">Aspartyl protease</keyword>
<keyword id="KW-1003">Cell membrane</keyword>
<keyword id="KW-0378">Hydrolase</keyword>
<keyword id="KW-0472">Membrane</keyword>
<keyword id="KW-0645">Protease</keyword>
<keyword id="KW-1185">Reference proteome</keyword>
<keyword id="KW-0812">Transmembrane</keyword>
<keyword id="KW-1133">Transmembrane helix</keyword>
<accession>Q182T8</accession>
<sequence>MLYILIIILLIGLDQLSKIWVLNNLVDVSTIPIINNVFHLTYVENRGAAFGLLQNNQWIFIIVALLATVFGLYYLNTRKVHIFGRLGIILIISGALGNLIDRVRLGFVVDYFDFRIIWEYVFNIADVFVVVGTVFLCIYVLFFESKSR</sequence>
<name>LSPA_CLOD6</name>
<proteinExistence type="inferred from homology"/>
<feature type="chain" id="PRO_0000289368" description="Lipoprotein signal peptidase">
    <location>
        <begin position="1"/>
        <end position="148"/>
    </location>
</feature>
<feature type="transmembrane region" description="Helical" evidence="1">
    <location>
        <begin position="57"/>
        <end position="77"/>
    </location>
</feature>
<feature type="transmembrane region" description="Helical" evidence="1">
    <location>
        <begin position="80"/>
        <end position="100"/>
    </location>
</feature>
<feature type="transmembrane region" description="Helical" evidence="1">
    <location>
        <begin position="124"/>
        <end position="144"/>
    </location>
</feature>
<feature type="active site" evidence="1">
    <location>
        <position position="110"/>
    </location>
</feature>
<feature type="active site" evidence="1">
    <location>
        <position position="126"/>
    </location>
</feature>